<feature type="chain" id="PRO_1000214158" description="Anhydro-N-acetylmuramic acid kinase">
    <location>
        <begin position="1"/>
        <end position="382"/>
    </location>
</feature>
<feature type="binding site" evidence="1">
    <location>
        <begin position="9"/>
        <end position="16"/>
    </location>
    <ligand>
        <name>ATP</name>
        <dbReference type="ChEBI" id="CHEBI:30616"/>
    </ligand>
</feature>
<name>ANMK_BACC7</name>
<comment type="function">
    <text evidence="1">Catalyzes the specific phosphorylation of 1,6-anhydro-N-acetylmuramic acid (anhMurNAc) with the simultaneous cleavage of the 1,6-anhydro ring, generating MurNAc-6-P. Is required for the utilization of anhMurNAc either imported from the medium or derived from its own cell wall murein, and thus plays a role in cell wall recycling.</text>
</comment>
<comment type="catalytic activity">
    <reaction evidence="1">
        <text>1,6-anhydro-N-acetyl-beta-muramate + ATP + H2O = N-acetyl-D-muramate 6-phosphate + ADP + H(+)</text>
        <dbReference type="Rhea" id="RHEA:24952"/>
        <dbReference type="ChEBI" id="CHEBI:15377"/>
        <dbReference type="ChEBI" id="CHEBI:15378"/>
        <dbReference type="ChEBI" id="CHEBI:30616"/>
        <dbReference type="ChEBI" id="CHEBI:58690"/>
        <dbReference type="ChEBI" id="CHEBI:58722"/>
        <dbReference type="ChEBI" id="CHEBI:456216"/>
        <dbReference type="EC" id="2.7.1.170"/>
    </reaction>
</comment>
<comment type="pathway">
    <text evidence="1">Amino-sugar metabolism; 1,6-anhydro-N-acetylmuramate degradation.</text>
</comment>
<comment type="pathway">
    <text evidence="1">Cell wall biogenesis; peptidoglycan recycling.</text>
</comment>
<comment type="similarity">
    <text evidence="1">Belongs to the anhydro-N-acetylmuramic acid kinase family.</text>
</comment>
<organism>
    <name type="scientific">Bacillus cereus (strain AH187)</name>
    <dbReference type="NCBI Taxonomy" id="405534"/>
    <lineage>
        <taxon>Bacteria</taxon>
        <taxon>Bacillati</taxon>
        <taxon>Bacillota</taxon>
        <taxon>Bacilli</taxon>
        <taxon>Bacillales</taxon>
        <taxon>Bacillaceae</taxon>
        <taxon>Bacillus</taxon>
        <taxon>Bacillus cereus group</taxon>
    </lineage>
</organism>
<accession>B7HRD6</accession>
<gene>
    <name evidence="1" type="primary">anmK</name>
    <name type="ordered locus">BCAH187_A2561</name>
</gene>
<reference key="1">
    <citation type="submission" date="2008-10" db="EMBL/GenBank/DDBJ databases">
        <title>Genome sequence of Bacillus cereus AH187.</title>
        <authorList>
            <person name="Dodson R.J."/>
            <person name="Durkin A.S."/>
            <person name="Rosovitz M.J."/>
            <person name="Rasko D.A."/>
            <person name="Kolsto A.B."/>
            <person name="Okstad O.A."/>
            <person name="Ravel J."/>
            <person name="Sutton G."/>
        </authorList>
    </citation>
    <scope>NUCLEOTIDE SEQUENCE [LARGE SCALE GENOMIC DNA]</scope>
    <source>
        <strain>AH187</strain>
    </source>
</reference>
<proteinExistence type="inferred from homology"/>
<keyword id="KW-0067">ATP-binding</keyword>
<keyword id="KW-0119">Carbohydrate metabolism</keyword>
<keyword id="KW-0418">Kinase</keyword>
<keyword id="KW-0547">Nucleotide-binding</keyword>
<keyword id="KW-0808">Transferase</keyword>
<protein>
    <recommendedName>
        <fullName evidence="1">Anhydro-N-acetylmuramic acid kinase</fullName>
        <ecNumber evidence="1">2.7.1.170</ecNumber>
    </recommendedName>
    <alternativeName>
        <fullName evidence="1">AnhMurNAc kinase</fullName>
    </alternativeName>
</protein>
<sequence>MYIAGVMSGTSLDGIDVALVRIEGSGVDSKVKLIHFTTVPFCNDIKSEIQQALSIENSNVQLICSLNFKLGLCFANAVKEVCKEANFSLEQLDLIGSHGQTIYHQPKPEGNMIASTLQIGEPAVIAYDTNTTVISNFRTMDMAAGGQGAPLVPYSEVILYRDPSKNRLLQNIGGIGNVTVIPSQKSDQNVIAFDTGPGNMIIDEVCQRLFQLPYDQNGEIAEQGEVVDEILTYCMNHPFLKMNPPKSTGREQFGEEFVSQLLKRYEKYSKENILTTVTMFTASSIVYHYKEFILPYYEIAEVILGGGGSYNDTLVEMIRYGLKDEKCTIFIQEDIGYSSEAKEAIAFAILANETYHRNPSNVPSATGAKKSVVLGNVTYPSI</sequence>
<evidence type="ECO:0000255" key="1">
    <source>
        <dbReference type="HAMAP-Rule" id="MF_01270"/>
    </source>
</evidence>
<dbReference type="EC" id="2.7.1.170" evidence="1"/>
<dbReference type="EMBL" id="CP001177">
    <property type="protein sequence ID" value="ACJ81719.1"/>
    <property type="molecule type" value="Genomic_DNA"/>
</dbReference>
<dbReference type="SMR" id="B7HRD6"/>
<dbReference type="KEGG" id="bcr:BCAH187_A2561"/>
<dbReference type="HOGENOM" id="CLU_038782_1_0_9"/>
<dbReference type="UniPathway" id="UPA00343"/>
<dbReference type="UniPathway" id="UPA00544"/>
<dbReference type="Proteomes" id="UP000002214">
    <property type="component" value="Chromosome"/>
</dbReference>
<dbReference type="GO" id="GO:0005524">
    <property type="term" value="F:ATP binding"/>
    <property type="evidence" value="ECO:0007669"/>
    <property type="project" value="UniProtKB-UniRule"/>
</dbReference>
<dbReference type="GO" id="GO:0016301">
    <property type="term" value="F:kinase activity"/>
    <property type="evidence" value="ECO:0007669"/>
    <property type="project" value="UniProtKB-KW"/>
</dbReference>
<dbReference type="GO" id="GO:0016773">
    <property type="term" value="F:phosphotransferase activity, alcohol group as acceptor"/>
    <property type="evidence" value="ECO:0007669"/>
    <property type="project" value="UniProtKB-UniRule"/>
</dbReference>
<dbReference type="GO" id="GO:0097175">
    <property type="term" value="P:1,6-anhydro-N-acetyl-beta-muramic acid catabolic process"/>
    <property type="evidence" value="ECO:0007669"/>
    <property type="project" value="UniProtKB-UniRule"/>
</dbReference>
<dbReference type="GO" id="GO:0006040">
    <property type="term" value="P:amino sugar metabolic process"/>
    <property type="evidence" value="ECO:0007669"/>
    <property type="project" value="InterPro"/>
</dbReference>
<dbReference type="GO" id="GO:0009254">
    <property type="term" value="P:peptidoglycan turnover"/>
    <property type="evidence" value="ECO:0007669"/>
    <property type="project" value="UniProtKB-UniRule"/>
</dbReference>
<dbReference type="CDD" id="cd24050">
    <property type="entry name" value="ASKHA_NBD_ANMK"/>
    <property type="match status" value="1"/>
</dbReference>
<dbReference type="Gene3D" id="3.30.420.40">
    <property type="match status" value="2"/>
</dbReference>
<dbReference type="HAMAP" id="MF_01270">
    <property type="entry name" value="AnhMurNAc_kinase"/>
    <property type="match status" value="1"/>
</dbReference>
<dbReference type="InterPro" id="IPR005338">
    <property type="entry name" value="Anhydro_N_Ac-Mur_kinase"/>
</dbReference>
<dbReference type="InterPro" id="IPR043129">
    <property type="entry name" value="ATPase_NBD"/>
</dbReference>
<dbReference type="NCBIfam" id="NF007142">
    <property type="entry name" value="PRK09585.2-1"/>
    <property type="match status" value="1"/>
</dbReference>
<dbReference type="NCBIfam" id="NF007148">
    <property type="entry name" value="PRK09585.3-2"/>
    <property type="match status" value="1"/>
</dbReference>
<dbReference type="PANTHER" id="PTHR30605">
    <property type="entry name" value="ANHYDRO-N-ACETYLMURAMIC ACID KINASE"/>
    <property type="match status" value="1"/>
</dbReference>
<dbReference type="PANTHER" id="PTHR30605:SF0">
    <property type="entry name" value="ANHYDRO-N-ACETYLMURAMIC ACID KINASE"/>
    <property type="match status" value="1"/>
</dbReference>
<dbReference type="Pfam" id="PF03702">
    <property type="entry name" value="AnmK"/>
    <property type="match status" value="1"/>
</dbReference>
<dbReference type="SUPFAM" id="SSF53067">
    <property type="entry name" value="Actin-like ATPase domain"/>
    <property type="match status" value="1"/>
</dbReference>